<name>CUTI3_ASPOR</name>
<sequence length="224" mass="23075">MVMLRSLLVSALAALAAGSPIAEPADQSLEARQLGSSNDLTNGACKDVTLIFARGSTEMGNMGTVIGPPLCSSLKSKLGADKVACQGVGGLYTGGLMQNALPQNTDPGAISTAKSLFEQASTKCPNTQIVAGGYSQGSAVIDNAVQQLSAEVKDKVKGVVFFGFTRNLQDKGQIPNYPKDNVKVFCAMGDLVCDGTLIVTAAHLTYTINAPEAASFLASKVQSA</sequence>
<keyword id="KW-1015">Disulfide bond</keyword>
<keyword id="KW-0378">Hydrolase</keyword>
<keyword id="KW-1185">Reference proteome</keyword>
<keyword id="KW-0964">Secreted</keyword>
<keyword id="KW-0719">Serine esterase</keyword>
<keyword id="KW-0732">Signal</keyword>
<gene>
    <name type="ORF">AO090011000113</name>
</gene>
<evidence type="ECO:0000250" key="1">
    <source>
        <dbReference type="UniProtKB" id="P00590"/>
    </source>
</evidence>
<evidence type="ECO:0000250" key="2">
    <source>
        <dbReference type="UniProtKB" id="P11373"/>
    </source>
</evidence>
<evidence type="ECO:0000250" key="3">
    <source>
        <dbReference type="UniProtKB" id="P52956"/>
    </source>
</evidence>
<evidence type="ECO:0000255" key="4"/>
<evidence type="ECO:0000255" key="5">
    <source>
        <dbReference type="PROSITE-ProRule" id="PRU10108"/>
    </source>
</evidence>
<evidence type="ECO:0000255" key="6">
    <source>
        <dbReference type="PROSITE-ProRule" id="PRU10109"/>
    </source>
</evidence>
<evidence type="ECO:0000305" key="7"/>
<protein>
    <recommendedName>
        <fullName>Probable cutinase 3</fullName>
        <ecNumber evidence="5 6">3.1.1.74</ecNumber>
    </recommendedName>
    <alternativeName>
        <fullName>Cutin hydrolase 3</fullName>
    </alternativeName>
</protein>
<accession>Q2U199</accession>
<reference key="1">
    <citation type="journal article" date="2005" name="Nature">
        <title>Genome sequencing and analysis of Aspergillus oryzae.</title>
        <authorList>
            <person name="Machida M."/>
            <person name="Asai K."/>
            <person name="Sano M."/>
            <person name="Tanaka T."/>
            <person name="Kumagai T."/>
            <person name="Terai G."/>
            <person name="Kusumoto K."/>
            <person name="Arima T."/>
            <person name="Akita O."/>
            <person name="Kashiwagi Y."/>
            <person name="Abe K."/>
            <person name="Gomi K."/>
            <person name="Horiuchi H."/>
            <person name="Kitamoto K."/>
            <person name="Kobayashi T."/>
            <person name="Takeuchi M."/>
            <person name="Denning D.W."/>
            <person name="Galagan J.E."/>
            <person name="Nierman W.C."/>
            <person name="Yu J."/>
            <person name="Archer D.B."/>
            <person name="Bennett J.W."/>
            <person name="Bhatnagar D."/>
            <person name="Cleveland T.E."/>
            <person name="Fedorova N.D."/>
            <person name="Gotoh O."/>
            <person name="Horikawa H."/>
            <person name="Hosoyama A."/>
            <person name="Ichinomiya M."/>
            <person name="Igarashi R."/>
            <person name="Iwashita K."/>
            <person name="Juvvadi P.R."/>
            <person name="Kato M."/>
            <person name="Kato Y."/>
            <person name="Kin T."/>
            <person name="Kokubun A."/>
            <person name="Maeda H."/>
            <person name="Maeyama N."/>
            <person name="Maruyama J."/>
            <person name="Nagasaki H."/>
            <person name="Nakajima T."/>
            <person name="Oda K."/>
            <person name="Okada K."/>
            <person name="Paulsen I."/>
            <person name="Sakamoto K."/>
            <person name="Sawano T."/>
            <person name="Takahashi M."/>
            <person name="Takase K."/>
            <person name="Terabayashi Y."/>
            <person name="Wortman J.R."/>
            <person name="Yamada O."/>
            <person name="Yamagata Y."/>
            <person name="Anazawa H."/>
            <person name="Hata Y."/>
            <person name="Koide Y."/>
            <person name="Komori T."/>
            <person name="Koyama Y."/>
            <person name="Minetoki T."/>
            <person name="Suharnan S."/>
            <person name="Tanaka A."/>
            <person name="Isono K."/>
            <person name="Kuhara S."/>
            <person name="Ogasawara N."/>
            <person name="Kikuchi H."/>
        </authorList>
    </citation>
    <scope>NUCLEOTIDE SEQUENCE [LARGE SCALE GENOMIC DNA]</scope>
    <source>
        <strain>ATCC 42149 / RIB 40</strain>
    </source>
</reference>
<comment type="function">
    <text evidence="1">Catalyzes the hydrolysis of complex carboxylic polyesters found in the cell wall of plants (By similarity). Degrades cutin, a macromolecule that forms the structure of the plant cuticle (By similarity).</text>
</comment>
<comment type="catalytic activity">
    <reaction evidence="5 6">
        <text>cutin + H2O = cutin monomers.</text>
        <dbReference type="EC" id="3.1.1.74"/>
    </reaction>
</comment>
<comment type="subcellular location">
    <subcellularLocation>
        <location evidence="2">Secreted</location>
    </subcellularLocation>
</comment>
<comment type="similarity">
    <text evidence="7">Belongs to the cutinase family.</text>
</comment>
<dbReference type="EC" id="3.1.1.74" evidence="5 6"/>
<dbReference type="EMBL" id="BA000055">
    <property type="protein sequence ID" value="BAE64666.1"/>
    <property type="molecule type" value="Genomic_DNA"/>
</dbReference>
<dbReference type="RefSeq" id="XP_001825799.1">
    <property type="nucleotide sequence ID" value="XM_001825747.1"/>
</dbReference>
<dbReference type="SMR" id="Q2U199"/>
<dbReference type="ESTHER" id="aspor-q2u199">
    <property type="family name" value="Cutinase"/>
</dbReference>
<dbReference type="EnsemblFungi" id="BAE64666">
    <property type="protein sequence ID" value="BAE64666"/>
    <property type="gene ID" value="AO090011000113"/>
</dbReference>
<dbReference type="GeneID" id="5997902"/>
<dbReference type="KEGG" id="aor:AO090011000113"/>
<dbReference type="VEuPathDB" id="FungiDB:AO090011000113"/>
<dbReference type="HOGENOM" id="CLU_040058_2_0_1"/>
<dbReference type="OMA" id="FFGFTRN"/>
<dbReference type="OrthoDB" id="67452at5052"/>
<dbReference type="Proteomes" id="UP000006564">
    <property type="component" value="Chromosome 7"/>
</dbReference>
<dbReference type="GO" id="GO:0005576">
    <property type="term" value="C:extracellular region"/>
    <property type="evidence" value="ECO:0007669"/>
    <property type="project" value="UniProtKB-SubCell"/>
</dbReference>
<dbReference type="GO" id="GO:0050525">
    <property type="term" value="F:cutinase activity"/>
    <property type="evidence" value="ECO:0000250"/>
    <property type="project" value="UniProtKB"/>
</dbReference>
<dbReference type="GO" id="GO:0016052">
    <property type="term" value="P:carbohydrate catabolic process"/>
    <property type="evidence" value="ECO:0007669"/>
    <property type="project" value="TreeGrafter"/>
</dbReference>
<dbReference type="FunFam" id="3.40.50.1820:FF:000235">
    <property type="entry name" value="Cutinase 1"/>
    <property type="match status" value="1"/>
</dbReference>
<dbReference type="Gene3D" id="3.40.50.1820">
    <property type="entry name" value="alpha/beta hydrolase"/>
    <property type="match status" value="1"/>
</dbReference>
<dbReference type="InterPro" id="IPR029058">
    <property type="entry name" value="AB_hydrolase_fold"/>
</dbReference>
<dbReference type="InterPro" id="IPR000675">
    <property type="entry name" value="Cutinase/axe"/>
</dbReference>
<dbReference type="InterPro" id="IPR043580">
    <property type="entry name" value="CUTINASE_1"/>
</dbReference>
<dbReference type="InterPro" id="IPR043579">
    <property type="entry name" value="CUTINASE_2"/>
</dbReference>
<dbReference type="InterPro" id="IPR011150">
    <property type="entry name" value="Cutinase_monf"/>
</dbReference>
<dbReference type="PANTHER" id="PTHR48250:SF3">
    <property type="entry name" value="CUTINASE 1-RELATED"/>
    <property type="match status" value="1"/>
</dbReference>
<dbReference type="PANTHER" id="PTHR48250">
    <property type="entry name" value="CUTINASE 2-RELATED"/>
    <property type="match status" value="1"/>
</dbReference>
<dbReference type="Pfam" id="PF01083">
    <property type="entry name" value="Cutinase"/>
    <property type="match status" value="1"/>
</dbReference>
<dbReference type="PRINTS" id="PR00129">
    <property type="entry name" value="CUTINASE"/>
</dbReference>
<dbReference type="SMART" id="SM01110">
    <property type="entry name" value="Cutinase"/>
    <property type="match status" value="1"/>
</dbReference>
<dbReference type="SUPFAM" id="SSF53474">
    <property type="entry name" value="alpha/beta-Hydrolases"/>
    <property type="match status" value="1"/>
</dbReference>
<dbReference type="PROSITE" id="PS00155">
    <property type="entry name" value="CUTINASE_1"/>
    <property type="match status" value="1"/>
</dbReference>
<dbReference type="PROSITE" id="PS00931">
    <property type="entry name" value="CUTINASE_2"/>
    <property type="match status" value="1"/>
</dbReference>
<organism>
    <name type="scientific">Aspergillus oryzae (strain ATCC 42149 / RIB 40)</name>
    <name type="common">Yellow koji mold</name>
    <dbReference type="NCBI Taxonomy" id="510516"/>
    <lineage>
        <taxon>Eukaryota</taxon>
        <taxon>Fungi</taxon>
        <taxon>Dikarya</taxon>
        <taxon>Ascomycota</taxon>
        <taxon>Pezizomycotina</taxon>
        <taxon>Eurotiomycetes</taxon>
        <taxon>Eurotiomycetidae</taxon>
        <taxon>Eurotiales</taxon>
        <taxon>Aspergillaceae</taxon>
        <taxon>Aspergillus</taxon>
        <taxon>Aspergillus subgen. Circumdati</taxon>
    </lineage>
</organism>
<proteinExistence type="inferred from homology"/>
<feature type="signal peptide" evidence="4">
    <location>
        <begin position="1"/>
        <end position="18"/>
    </location>
</feature>
<feature type="chain" id="PRO_0000395254" description="Probable cutinase 3">
    <location>
        <begin position="19"/>
        <end position="224"/>
    </location>
</feature>
<feature type="active site" description="Nucleophile" evidence="1">
    <location>
        <position position="135"/>
    </location>
</feature>
<feature type="active site" evidence="1">
    <location>
        <position position="190"/>
    </location>
</feature>
<feature type="active site" description="Proton donor/acceptor" evidence="1">
    <location>
        <position position="203"/>
    </location>
</feature>
<feature type="site" description="Transition state stabilizer" evidence="1">
    <location>
        <position position="56"/>
    </location>
</feature>
<feature type="site" description="Transition state stabilizer" evidence="1">
    <location>
        <position position="136"/>
    </location>
</feature>
<feature type="disulfide bond" evidence="3">
    <location>
        <begin position="45"/>
        <end position="124"/>
    </location>
</feature>
<feature type="disulfide bond" evidence="3">
    <location>
        <begin position="71"/>
        <end position="85"/>
    </location>
</feature>
<feature type="disulfide bond" evidence="3">
    <location>
        <begin position="186"/>
        <end position="193"/>
    </location>
</feature>